<sequence>MSAVMTPAEFNDYKVADISLAAWGRRETIIAESEMPALMGLRRKYAGDQPLKGAKILGCIHMTIQTAVLIETLVALGAEVRWSSCNIFSTQDQAAAAIAAAGIPVFAWKGETEEEYEWCIEQTILKDGQPWDANMILDDGGDLTEIIHKKYPAMLDKIHGVTEETTTGVHRLLDMLAKGELKIPAINVNDSVTKSKNDNKYGCRHSLNDAIKRGTDHLLSGKQALVIGYGDVGKGSAQSLRQEGMIVKVTEVDPICAMQACMDGFELVSPFIDGENDGTEASIDKALLGKIDLIVTTTGNVNVCDSNMLKALKKRAVVCNIGHFDNEIDTAFMRKNWAWEEVKPQVHKIHRTGPGSFDAQNDDYLILLAEGRLVNLGNATGHPSRIMDGSFANQVLAQIFLFEQKYADLAPAKKSERLTVEVLPKKLDEEVALEMVRGFGGVVTKLTKTQADYIGVTVEGPFKPDAYRY</sequence>
<dbReference type="EC" id="3.13.2.1" evidence="1"/>
<dbReference type="EMBL" id="CP000075">
    <property type="protein sequence ID" value="AAY35530.1"/>
    <property type="molecule type" value="Genomic_DNA"/>
</dbReference>
<dbReference type="RefSeq" id="WP_011266417.1">
    <property type="nucleotide sequence ID" value="NC_007005.1"/>
</dbReference>
<dbReference type="RefSeq" id="YP_233568.1">
    <property type="nucleotide sequence ID" value="NC_007005.1"/>
</dbReference>
<dbReference type="SMR" id="Q4ZZ92"/>
<dbReference type="STRING" id="205918.Psyr_0460"/>
<dbReference type="KEGG" id="psb:Psyr_0460"/>
<dbReference type="PATRIC" id="fig|205918.7.peg.478"/>
<dbReference type="eggNOG" id="COG0499">
    <property type="taxonomic scope" value="Bacteria"/>
</dbReference>
<dbReference type="HOGENOM" id="CLU_025194_2_1_6"/>
<dbReference type="OrthoDB" id="9802717at2"/>
<dbReference type="UniPathway" id="UPA00314">
    <property type="reaction ID" value="UER00076"/>
</dbReference>
<dbReference type="Proteomes" id="UP000000426">
    <property type="component" value="Chromosome"/>
</dbReference>
<dbReference type="GO" id="GO:0005829">
    <property type="term" value="C:cytosol"/>
    <property type="evidence" value="ECO:0007669"/>
    <property type="project" value="TreeGrafter"/>
</dbReference>
<dbReference type="GO" id="GO:0004013">
    <property type="term" value="F:adenosylhomocysteinase activity"/>
    <property type="evidence" value="ECO:0007669"/>
    <property type="project" value="UniProtKB-UniRule"/>
</dbReference>
<dbReference type="GO" id="GO:0071269">
    <property type="term" value="P:L-homocysteine biosynthetic process"/>
    <property type="evidence" value="ECO:0007669"/>
    <property type="project" value="UniProtKB-UniRule"/>
</dbReference>
<dbReference type="GO" id="GO:0006730">
    <property type="term" value="P:one-carbon metabolic process"/>
    <property type="evidence" value="ECO:0007669"/>
    <property type="project" value="UniProtKB-KW"/>
</dbReference>
<dbReference type="GO" id="GO:0033353">
    <property type="term" value="P:S-adenosylmethionine cycle"/>
    <property type="evidence" value="ECO:0007669"/>
    <property type="project" value="TreeGrafter"/>
</dbReference>
<dbReference type="CDD" id="cd00401">
    <property type="entry name" value="SAHH"/>
    <property type="match status" value="1"/>
</dbReference>
<dbReference type="FunFam" id="3.40.50.1480:FF:000006">
    <property type="entry name" value="Adenosylhomocysteinase"/>
    <property type="match status" value="1"/>
</dbReference>
<dbReference type="FunFam" id="3.40.50.1480:FF:000007">
    <property type="entry name" value="Adenosylhomocysteinase"/>
    <property type="match status" value="1"/>
</dbReference>
<dbReference type="FunFam" id="3.40.50.720:FF:000155">
    <property type="entry name" value="Adenosylhomocysteinase"/>
    <property type="match status" value="1"/>
</dbReference>
<dbReference type="Gene3D" id="3.40.50.1480">
    <property type="entry name" value="Adenosylhomocysteinase-like"/>
    <property type="match status" value="3"/>
</dbReference>
<dbReference type="Gene3D" id="3.40.50.720">
    <property type="entry name" value="NAD(P)-binding Rossmann-like Domain"/>
    <property type="match status" value="1"/>
</dbReference>
<dbReference type="HAMAP" id="MF_00563">
    <property type="entry name" value="AdoHcyase"/>
    <property type="match status" value="1"/>
</dbReference>
<dbReference type="InterPro" id="IPR042172">
    <property type="entry name" value="Adenosylhomocyst_ase-like_sf"/>
</dbReference>
<dbReference type="InterPro" id="IPR000043">
    <property type="entry name" value="Adenosylhomocysteinase-like"/>
</dbReference>
<dbReference type="InterPro" id="IPR015878">
    <property type="entry name" value="Ado_hCys_hydrolase_NAD-bd"/>
</dbReference>
<dbReference type="InterPro" id="IPR036291">
    <property type="entry name" value="NAD(P)-bd_dom_sf"/>
</dbReference>
<dbReference type="InterPro" id="IPR020082">
    <property type="entry name" value="S-Ado-L-homoCys_hydrolase_CS"/>
</dbReference>
<dbReference type="NCBIfam" id="TIGR00936">
    <property type="entry name" value="ahcY"/>
    <property type="match status" value="1"/>
</dbReference>
<dbReference type="NCBIfam" id="NF004005">
    <property type="entry name" value="PRK05476.2-3"/>
    <property type="match status" value="1"/>
</dbReference>
<dbReference type="PANTHER" id="PTHR23420">
    <property type="entry name" value="ADENOSYLHOMOCYSTEINASE"/>
    <property type="match status" value="1"/>
</dbReference>
<dbReference type="PANTHER" id="PTHR23420:SF0">
    <property type="entry name" value="ADENOSYLHOMOCYSTEINASE"/>
    <property type="match status" value="1"/>
</dbReference>
<dbReference type="Pfam" id="PF05221">
    <property type="entry name" value="AdoHcyase"/>
    <property type="match status" value="1"/>
</dbReference>
<dbReference type="Pfam" id="PF00670">
    <property type="entry name" value="AdoHcyase_NAD"/>
    <property type="match status" value="1"/>
</dbReference>
<dbReference type="PIRSF" id="PIRSF001109">
    <property type="entry name" value="Ad_hcy_hydrolase"/>
    <property type="match status" value="1"/>
</dbReference>
<dbReference type="SMART" id="SM00996">
    <property type="entry name" value="AdoHcyase"/>
    <property type="match status" value="1"/>
</dbReference>
<dbReference type="SMART" id="SM00997">
    <property type="entry name" value="AdoHcyase_NAD"/>
    <property type="match status" value="1"/>
</dbReference>
<dbReference type="SUPFAM" id="SSF52283">
    <property type="entry name" value="Formate/glycerate dehydrogenase catalytic domain-like"/>
    <property type="match status" value="1"/>
</dbReference>
<dbReference type="SUPFAM" id="SSF51735">
    <property type="entry name" value="NAD(P)-binding Rossmann-fold domains"/>
    <property type="match status" value="1"/>
</dbReference>
<dbReference type="PROSITE" id="PS00738">
    <property type="entry name" value="ADOHCYASE_1"/>
    <property type="match status" value="1"/>
</dbReference>
<dbReference type="PROSITE" id="PS00739">
    <property type="entry name" value="ADOHCYASE_2"/>
    <property type="match status" value="1"/>
</dbReference>
<gene>
    <name evidence="1" type="primary">ahcY</name>
    <name type="ordered locus">Psyr_0460</name>
</gene>
<keyword id="KW-0963">Cytoplasm</keyword>
<keyword id="KW-0378">Hydrolase</keyword>
<keyword id="KW-0520">NAD</keyword>
<keyword id="KW-0554">One-carbon metabolism</keyword>
<accession>Q4ZZ92</accession>
<comment type="function">
    <text evidence="1">May play a key role in the regulation of the intracellular concentration of adenosylhomocysteine.</text>
</comment>
<comment type="catalytic activity">
    <reaction evidence="1">
        <text>S-adenosyl-L-homocysteine + H2O = L-homocysteine + adenosine</text>
        <dbReference type="Rhea" id="RHEA:21708"/>
        <dbReference type="ChEBI" id="CHEBI:15377"/>
        <dbReference type="ChEBI" id="CHEBI:16335"/>
        <dbReference type="ChEBI" id="CHEBI:57856"/>
        <dbReference type="ChEBI" id="CHEBI:58199"/>
        <dbReference type="EC" id="3.13.2.1"/>
    </reaction>
</comment>
<comment type="cofactor">
    <cofactor evidence="1">
        <name>NAD(+)</name>
        <dbReference type="ChEBI" id="CHEBI:57540"/>
    </cofactor>
    <text evidence="1">Binds 1 NAD(+) per subunit.</text>
</comment>
<comment type="pathway">
    <text evidence="1">Amino-acid biosynthesis; L-homocysteine biosynthesis; L-homocysteine from S-adenosyl-L-homocysteine: step 1/1.</text>
</comment>
<comment type="subcellular location">
    <subcellularLocation>
        <location evidence="1">Cytoplasm</location>
    </subcellularLocation>
</comment>
<comment type="similarity">
    <text evidence="1">Belongs to the adenosylhomocysteinase family.</text>
</comment>
<evidence type="ECO:0000255" key="1">
    <source>
        <dbReference type="HAMAP-Rule" id="MF_00563"/>
    </source>
</evidence>
<name>SAHH_PSEU2</name>
<feature type="chain" id="PRO_1000024754" description="Adenosylhomocysteinase">
    <location>
        <begin position="1"/>
        <end position="469"/>
    </location>
</feature>
<feature type="binding site" evidence="1">
    <location>
        <position position="63"/>
    </location>
    <ligand>
        <name>substrate</name>
    </ligand>
</feature>
<feature type="binding site" evidence="1">
    <location>
        <position position="139"/>
    </location>
    <ligand>
        <name>substrate</name>
    </ligand>
</feature>
<feature type="binding site" evidence="1">
    <location>
        <position position="164"/>
    </location>
    <ligand>
        <name>substrate</name>
    </ligand>
</feature>
<feature type="binding site" evidence="1">
    <location>
        <begin position="165"/>
        <end position="167"/>
    </location>
    <ligand>
        <name>NAD(+)</name>
        <dbReference type="ChEBI" id="CHEBI:57540"/>
    </ligand>
</feature>
<feature type="binding site" evidence="1">
    <location>
        <position position="194"/>
    </location>
    <ligand>
        <name>substrate</name>
    </ligand>
</feature>
<feature type="binding site" evidence="1">
    <location>
        <position position="198"/>
    </location>
    <ligand>
        <name>substrate</name>
    </ligand>
</feature>
<feature type="binding site" evidence="1">
    <location>
        <position position="199"/>
    </location>
    <ligand>
        <name>NAD(+)</name>
        <dbReference type="ChEBI" id="CHEBI:57540"/>
    </ligand>
</feature>
<feature type="binding site" evidence="1">
    <location>
        <begin position="228"/>
        <end position="233"/>
    </location>
    <ligand>
        <name>NAD(+)</name>
        <dbReference type="ChEBI" id="CHEBI:57540"/>
    </ligand>
</feature>
<feature type="binding site" evidence="1">
    <location>
        <position position="251"/>
    </location>
    <ligand>
        <name>NAD(+)</name>
        <dbReference type="ChEBI" id="CHEBI:57540"/>
    </ligand>
</feature>
<feature type="binding site" evidence="1">
    <location>
        <position position="300"/>
    </location>
    <ligand>
        <name>NAD(+)</name>
        <dbReference type="ChEBI" id="CHEBI:57540"/>
    </ligand>
</feature>
<feature type="binding site" evidence="1">
    <location>
        <begin position="321"/>
        <end position="323"/>
    </location>
    <ligand>
        <name>NAD(+)</name>
        <dbReference type="ChEBI" id="CHEBI:57540"/>
    </ligand>
</feature>
<feature type="binding site" evidence="1">
    <location>
        <position position="375"/>
    </location>
    <ligand>
        <name>NAD(+)</name>
        <dbReference type="ChEBI" id="CHEBI:57540"/>
    </ligand>
</feature>
<proteinExistence type="inferred from homology"/>
<organism>
    <name type="scientific">Pseudomonas syringae pv. syringae (strain B728a)</name>
    <dbReference type="NCBI Taxonomy" id="205918"/>
    <lineage>
        <taxon>Bacteria</taxon>
        <taxon>Pseudomonadati</taxon>
        <taxon>Pseudomonadota</taxon>
        <taxon>Gammaproteobacteria</taxon>
        <taxon>Pseudomonadales</taxon>
        <taxon>Pseudomonadaceae</taxon>
        <taxon>Pseudomonas</taxon>
        <taxon>Pseudomonas syringae</taxon>
    </lineage>
</organism>
<reference key="1">
    <citation type="journal article" date="2005" name="Proc. Natl. Acad. Sci. U.S.A.">
        <title>Comparison of the complete genome sequences of Pseudomonas syringae pv. syringae B728a and pv. tomato DC3000.</title>
        <authorList>
            <person name="Feil H."/>
            <person name="Feil W.S."/>
            <person name="Chain P."/>
            <person name="Larimer F."/>
            <person name="Dibartolo G."/>
            <person name="Copeland A."/>
            <person name="Lykidis A."/>
            <person name="Trong S."/>
            <person name="Nolan M."/>
            <person name="Goltsman E."/>
            <person name="Thiel J."/>
            <person name="Malfatti S."/>
            <person name="Loper J.E."/>
            <person name="Lapidus A."/>
            <person name="Detter J.C."/>
            <person name="Land M."/>
            <person name="Richardson P.M."/>
            <person name="Kyrpides N.C."/>
            <person name="Ivanova N."/>
            <person name="Lindow S.E."/>
        </authorList>
    </citation>
    <scope>NUCLEOTIDE SEQUENCE [LARGE SCALE GENOMIC DNA]</scope>
    <source>
        <strain>B728a</strain>
    </source>
</reference>
<protein>
    <recommendedName>
        <fullName evidence="1">Adenosylhomocysteinase</fullName>
        <ecNumber evidence="1">3.13.2.1</ecNumber>
    </recommendedName>
    <alternativeName>
        <fullName evidence="1">S-adenosyl-L-homocysteine hydrolase</fullName>
        <shortName evidence="1">AdoHcyase</shortName>
    </alternativeName>
</protein>